<gene>
    <name evidence="1" type="primary">nadA</name>
    <name type="ordered locus">Cpar_0594</name>
</gene>
<organism>
    <name type="scientific">Chlorobaculum parvum (strain DSM 263 / NCIMB 8327)</name>
    <name type="common">Chlorobium vibrioforme subsp. thiosulfatophilum</name>
    <dbReference type="NCBI Taxonomy" id="517417"/>
    <lineage>
        <taxon>Bacteria</taxon>
        <taxon>Pseudomonadati</taxon>
        <taxon>Chlorobiota</taxon>
        <taxon>Chlorobiia</taxon>
        <taxon>Chlorobiales</taxon>
        <taxon>Chlorobiaceae</taxon>
        <taxon>Chlorobaculum</taxon>
    </lineage>
</organism>
<evidence type="ECO:0000255" key="1">
    <source>
        <dbReference type="HAMAP-Rule" id="MF_00568"/>
    </source>
</evidence>
<reference key="1">
    <citation type="submission" date="2008-06" db="EMBL/GenBank/DDBJ databases">
        <title>Complete sequence of Chlorobaculum parvum NCIB 8327.</title>
        <authorList>
            <consortium name="US DOE Joint Genome Institute"/>
            <person name="Lucas S."/>
            <person name="Copeland A."/>
            <person name="Lapidus A."/>
            <person name="Glavina del Rio T."/>
            <person name="Dalin E."/>
            <person name="Tice H."/>
            <person name="Bruce D."/>
            <person name="Goodwin L."/>
            <person name="Pitluck S."/>
            <person name="Schmutz J."/>
            <person name="Larimer F."/>
            <person name="Land M."/>
            <person name="Hauser L."/>
            <person name="Kyrpides N."/>
            <person name="Mikhailova N."/>
            <person name="Zhao F."/>
            <person name="Li T."/>
            <person name="Liu Z."/>
            <person name="Overmann J."/>
            <person name="Bryant D.A."/>
            <person name="Richardson P."/>
        </authorList>
    </citation>
    <scope>NUCLEOTIDE SEQUENCE [LARGE SCALE GENOMIC DNA]</scope>
    <source>
        <strain>DSM 263 / NCIMB 8327</strain>
    </source>
</reference>
<name>NADA_CHLP8</name>
<comment type="function">
    <text evidence="1">Catalyzes the condensation of iminoaspartate with dihydroxyacetone phosphate to form quinolinate.</text>
</comment>
<comment type="catalytic activity">
    <reaction evidence="1">
        <text>iminosuccinate + dihydroxyacetone phosphate = quinolinate + phosphate + 2 H2O + H(+)</text>
        <dbReference type="Rhea" id="RHEA:25888"/>
        <dbReference type="ChEBI" id="CHEBI:15377"/>
        <dbReference type="ChEBI" id="CHEBI:15378"/>
        <dbReference type="ChEBI" id="CHEBI:29959"/>
        <dbReference type="ChEBI" id="CHEBI:43474"/>
        <dbReference type="ChEBI" id="CHEBI:57642"/>
        <dbReference type="ChEBI" id="CHEBI:77875"/>
        <dbReference type="EC" id="2.5.1.72"/>
    </reaction>
    <physiologicalReaction direction="left-to-right" evidence="1">
        <dbReference type="Rhea" id="RHEA:25889"/>
    </physiologicalReaction>
</comment>
<comment type="cofactor">
    <cofactor evidence="1">
        <name>[4Fe-4S] cluster</name>
        <dbReference type="ChEBI" id="CHEBI:49883"/>
    </cofactor>
    <text evidence="1">Binds 1 [4Fe-4S] cluster per subunit.</text>
</comment>
<comment type="pathway">
    <text evidence="1">Cofactor biosynthesis; NAD(+) biosynthesis; quinolinate from iminoaspartate: step 1/1.</text>
</comment>
<comment type="subcellular location">
    <subcellularLocation>
        <location evidence="1">Cytoplasm</location>
    </subcellularLocation>
</comment>
<comment type="similarity">
    <text evidence="1">Belongs to the quinolinate synthase family. Type 2 subfamily.</text>
</comment>
<keyword id="KW-0004">4Fe-4S</keyword>
<keyword id="KW-0963">Cytoplasm</keyword>
<keyword id="KW-0408">Iron</keyword>
<keyword id="KW-0411">Iron-sulfur</keyword>
<keyword id="KW-0479">Metal-binding</keyword>
<keyword id="KW-0662">Pyridine nucleotide biosynthesis</keyword>
<keyword id="KW-0808">Transferase</keyword>
<feature type="chain" id="PRO_1000129433" description="Quinolinate synthase">
    <location>
        <begin position="1"/>
        <end position="322"/>
    </location>
</feature>
<feature type="binding site" evidence="1">
    <location>
        <position position="37"/>
    </location>
    <ligand>
        <name>iminosuccinate</name>
        <dbReference type="ChEBI" id="CHEBI:77875"/>
    </ligand>
</feature>
<feature type="binding site" evidence="1">
    <location>
        <position position="54"/>
    </location>
    <ligand>
        <name>iminosuccinate</name>
        <dbReference type="ChEBI" id="CHEBI:77875"/>
    </ligand>
</feature>
<feature type="binding site" evidence="1">
    <location>
        <position position="99"/>
    </location>
    <ligand>
        <name>[4Fe-4S] cluster</name>
        <dbReference type="ChEBI" id="CHEBI:49883"/>
    </ligand>
</feature>
<feature type="binding site" evidence="1">
    <location>
        <begin position="125"/>
        <end position="127"/>
    </location>
    <ligand>
        <name>iminosuccinate</name>
        <dbReference type="ChEBI" id="CHEBI:77875"/>
    </ligand>
</feature>
<feature type="binding site" evidence="1">
    <location>
        <position position="142"/>
    </location>
    <ligand>
        <name>iminosuccinate</name>
        <dbReference type="ChEBI" id="CHEBI:77875"/>
    </ligand>
</feature>
<feature type="binding site" evidence="1">
    <location>
        <position position="185"/>
    </location>
    <ligand>
        <name>[4Fe-4S] cluster</name>
        <dbReference type="ChEBI" id="CHEBI:49883"/>
    </ligand>
</feature>
<feature type="binding site" evidence="1">
    <location>
        <begin position="211"/>
        <end position="213"/>
    </location>
    <ligand>
        <name>iminosuccinate</name>
        <dbReference type="ChEBI" id="CHEBI:77875"/>
    </ligand>
</feature>
<feature type="binding site" evidence="1">
    <location>
        <position position="228"/>
    </location>
    <ligand>
        <name>iminosuccinate</name>
        <dbReference type="ChEBI" id="CHEBI:77875"/>
    </ligand>
</feature>
<feature type="binding site" evidence="1">
    <location>
        <position position="278"/>
    </location>
    <ligand>
        <name>[4Fe-4S] cluster</name>
        <dbReference type="ChEBI" id="CHEBI:49883"/>
    </ligand>
</feature>
<sequence length="322" mass="35652">MTTANDRPEEASKLSTEELLERIVALKKELNAVILAHYYTVPEVQQAADIVGDSLALARAAEDNSADVIVFAGVYFMAETAKILNPGKLVLMPDDHAGCPLADSCPEAEFRAFREQHPDAIAITYINSTAAIKALSDITCTSSNAAHIVEQIPPEQKIIFGPDRNLGTWLSKKLDRDMILWQGYCYVHDAYSEVYMIQAMAKYPDAELIAHPECRDEVLRHASFVGSTAALLDYTVKSPSQSFIVATEPGILYEMEKRSPGKTFIPAPKDPANPRSVCTQMKQNTLEKLYLCMVNRSPEITVDENLREAALKPIKKMLEMSA</sequence>
<dbReference type="EC" id="2.5.1.72" evidence="1"/>
<dbReference type="EMBL" id="CP001099">
    <property type="protein sequence ID" value="ACF11014.1"/>
    <property type="molecule type" value="Genomic_DNA"/>
</dbReference>
<dbReference type="RefSeq" id="WP_012501847.1">
    <property type="nucleotide sequence ID" value="NC_011027.1"/>
</dbReference>
<dbReference type="SMR" id="B3QM61"/>
<dbReference type="STRING" id="517417.Cpar_0594"/>
<dbReference type="KEGG" id="cpc:Cpar_0594"/>
<dbReference type="eggNOG" id="COG0379">
    <property type="taxonomic scope" value="Bacteria"/>
</dbReference>
<dbReference type="HOGENOM" id="CLU_047382_0_0_10"/>
<dbReference type="OrthoDB" id="9801204at2"/>
<dbReference type="UniPathway" id="UPA00253">
    <property type="reaction ID" value="UER00327"/>
</dbReference>
<dbReference type="Proteomes" id="UP000008811">
    <property type="component" value="Chromosome"/>
</dbReference>
<dbReference type="GO" id="GO:0005829">
    <property type="term" value="C:cytosol"/>
    <property type="evidence" value="ECO:0007669"/>
    <property type="project" value="TreeGrafter"/>
</dbReference>
<dbReference type="GO" id="GO:0051539">
    <property type="term" value="F:4 iron, 4 sulfur cluster binding"/>
    <property type="evidence" value="ECO:0007669"/>
    <property type="project" value="UniProtKB-KW"/>
</dbReference>
<dbReference type="GO" id="GO:0046872">
    <property type="term" value="F:metal ion binding"/>
    <property type="evidence" value="ECO:0007669"/>
    <property type="project" value="UniProtKB-KW"/>
</dbReference>
<dbReference type="GO" id="GO:0008987">
    <property type="term" value="F:quinolinate synthetase A activity"/>
    <property type="evidence" value="ECO:0007669"/>
    <property type="project" value="UniProtKB-UniRule"/>
</dbReference>
<dbReference type="GO" id="GO:0034628">
    <property type="term" value="P:'de novo' NAD biosynthetic process from L-aspartate"/>
    <property type="evidence" value="ECO:0007669"/>
    <property type="project" value="TreeGrafter"/>
</dbReference>
<dbReference type="FunFam" id="3.40.50.10800:FF:000003">
    <property type="entry name" value="Quinolinate synthase A"/>
    <property type="match status" value="1"/>
</dbReference>
<dbReference type="Gene3D" id="3.40.50.10800">
    <property type="entry name" value="NadA-like"/>
    <property type="match status" value="3"/>
</dbReference>
<dbReference type="HAMAP" id="MF_00568">
    <property type="entry name" value="NadA_type2"/>
    <property type="match status" value="1"/>
</dbReference>
<dbReference type="InterPro" id="IPR003473">
    <property type="entry name" value="NadA"/>
</dbReference>
<dbReference type="InterPro" id="IPR036094">
    <property type="entry name" value="NadA_sf"/>
</dbReference>
<dbReference type="InterPro" id="IPR023066">
    <property type="entry name" value="Quinolinate_synth_type2"/>
</dbReference>
<dbReference type="NCBIfam" id="TIGR00550">
    <property type="entry name" value="nadA"/>
    <property type="match status" value="1"/>
</dbReference>
<dbReference type="NCBIfam" id="NF006878">
    <property type="entry name" value="PRK09375.1-2"/>
    <property type="match status" value="1"/>
</dbReference>
<dbReference type="PANTHER" id="PTHR30573:SF0">
    <property type="entry name" value="QUINOLINATE SYNTHASE, CHLOROPLASTIC"/>
    <property type="match status" value="1"/>
</dbReference>
<dbReference type="PANTHER" id="PTHR30573">
    <property type="entry name" value="QUINOLINATE SYNTHETASE A"/>
    <property type="match status" value="1"/>
</dbReference>
<dbReference type="Pfam" id="PF02445">
    <property type="entry name" value="NadA"/>
    <property type="match status" value="1"/>
</dbReference>
<dbReference type="SUPFAM" id="SSF142754">
    <property type="entry name" value="NadA-like"/>
    <property type="match status" value="1"/>
</dbReference>
<accession>B3QM61</accession>
<protein>
    <recommendedName>
        <fullName evidence="1">Quinolinate synthase</fullName>
        <ecNumber evidence="1">2.5.1.72</ecNumber>
    </recommendedName>
</protein>
<proteinExistence type="inferred from homology"/>